<reference key="1">
    <citation type="journal article" date="2003" name="Proc. Natl. Acad. Sci. U.S.A.">
        <title>The complete genome sequence of Mycobacterium bovis.</title>
        <authorList>
            <person name="Garnier T."/>
            <person name="Eiglmeier K."/>
            <person name="Camus J.-C."/>
            <person name="Medina N."/>
            <person name="Mansoor H."/>
            <person name="Pryor M."/>
            <person name="Duthoy S."/>
            <person name="Grondin S."/>
            <person name="Lacroix C."/>
            <person name="Monsempe C."/>
            <person name="Simon S."/>
            <person name="Harris B."/>
            <person name="Atkin R."/>
            <person name="Doggett J."/>
            <person name="Mayes R."/>
            <person name="Keating L."/>
            <person name="Wheeler P.R."/>
            <person name="Parkhill J."/>
            <person name="Barrell B.G."/>
            <person name="Cole S.T."/>
            <person name="Gordon S.V."/>
            <person name="Hewinson R.G."/>
        </authorList>
    </citation>
    <scope>NUCLEOTIDE SEQUENCE [LARGE SCALE GENOMIC DNA]</scope>
    <source>
        <strain>ATCC BAA-935 / AF2122/97</strain>
    </source>
</reference>
<reference key="2">
    <citation type="journal article" date="2017" name="Genome Announc.">
        <title>Updated reference genome sequence and annotation of Mycobacterium bovis AF2122/97.</title>
        <authorList>
            <person name="Malone K.M."/>
            <person name="Farrell D."/>
            <person name="Stuber T.P."/>
            <person name="Schubert O.T."/>
            <person name="Aebersold R."/>
            <person name="Robbe-Austerman S."/>
            <person name="Gordon S.V."/>
        </authorList>
    </citation>
    <scope>NUCLEOTIDE SEQUENCE [LARGE SCALE GENOMIC DNA]</scope>
    <scope>GENOME REANNOTATION</scope>
    <source>
        <strain>ATCC BAA-935 / AF2122/97</strain>
    </source>
</reference>
<comment type="function">
    <text evidence="1">Forms part of the ribosomal stalk, playing a central role in the interaction of the ribosome with GTP-bound translation factors.</text>
</comment>
<comment type="subunit">
    <text evidence="1">Part of the ribosomal stalk of the 50S ribosomal subunit. The N-terminus interacts with L11 and the large rRNA to form the base of the stalk. The C-terminus forms an elongated spine to which L12 dimers bind in a sequential fashion forming a multimeric L10(L12)X complex (By similarity).</text>
</comment>
<comment type="similarity">
    <text evidence="2">Belongs to the universal ribosomal protein uL10 family.</text>
</comment>
<keyword id="KW-1185">Reference proteome</keyword>
<keyword id="KW-0687">Ribonucleoprotein</keyword>
<keyword id="KW-0689">Ribosomal protein</keyword>
<keyword id="KW-0694">RNA-binding</keyword>
<keyword id="KW-0699">rRNA-binding</keyword>
<dbReference type="EMBL" id="LT708304">
    <property type="protein sequence ID" value="SIT99268.1"/>
    <property type="molecule type" value="Genomic_DNA"/>
</dbReference>
<dbReference type="RefSeq" id="NP_854328.1">
    <property type="nucleotide sequence ID" value="NC_002945.3"/>
</dbReference>
<dbReference type="RefSeq" id="WP_003403341.1">
    <property type="nucleotide sequence ID" value="NC_002945.4"/>
</dbReference>
<dbReference type="SMR" id="P66045"/>
<dbReference type="GeneID" id="45424611"/>
<dbReference type="KEGG" id="mbo:BQ2027_MB0670"/>
<dbReference type="PATRIC" id="fig|233413.5.peg.730"/>
<dbReference type="Proteomes" id="UP000001419">
    <property type="component" value="Chromosome"/>
</dbReference>
<dbReference type="GO" id="GO:0015934">
    <property type="term" value="C:large ribosomal subunit"/>
    <property type="evidence" value="ECO:0007669"/>
    <property type="project" value="InterPro"/>
</dbReference>
<dbReference type="GO" id="GO:0070180">
    <property type="term" value="F:large ribosomal subunit rRNA binding"/>
    <property type="evidence" value="ECO:0007669"/>
    <property type="project" value="UniProtKB-UniRule"/>
</dbReference>
<dbReference type="GO" id="GO:0003735">
    <property type="term" value="F:structural constituent of ribosome"/>
    <property type="evidence" value="ECO:0007669"/>
    <property type="project" value="InterPro"/>
</dbReference>
<dbReference type="GO" id="GO:0006412">
    <property type="term" value="P:translation"/>
    <property type="evidence" value="ECO:0007669"/>
    <property type="project" value="UniProtKB-UniRule"/>
</dbReference>
<dbReference type="CDD" id="cd05797">
    <property type="entry name" value="Ribosomal_L10"/>
    <property type="match status" value="1"/>
</dbReference>
<dbReference type="FunFam" id="3.30.70.1730:FF:000003">
    <property type="entry name" value="50S ribosomal protein L10"/>
    <property type="match status" value="1"/>
</dbReference>
<dbReference type="Gene3D" id="3.30.70.1730">
    <property type="match status" value="1"/>
</dbReference>
<dbReference type="Gene3D" id="6.10.250.290">
    <property type="match status" value="1"/>
</dbReference>
<dbReference type="HAMAP" id="MF_00362">
    <property type="entry name" value="Ribosomal_uL10"/>
    <property type="match status" value="1"/>
</dbReference>
<dbReference type="InterPro" id="IPR001790">
    <property type="entry name" value="Ribosomal_uL10"/>
</dbReference>
<dbReference type="InterPro" id="IPR043141">
    <property type="entry name" value="Ribosomal_uL10-like_sf"/>
</dbReference>
<dbReference type="InterPro" id="IPR022973">
    <property type="entry name" value="Ribosomal_uL10_bac"/>
</dbReference>
<dbReference type="InterPro" id="IPR047865">
    <property type="entry name" value="Ribosomal_uL10_bac_type"/>
</dbReference>
<dbReference type="InterPro" id="IPR002363">
    <property type="entry name" value="Ribosomal_uL10_CS_bac"/>
</dbReference>
<dbReference type="NCBIfam" id="NF000955">
    <property type="entry name" value="PRK00099.1-1"/>
    <property type="match status" value="1"/>
</dbReference>
<dbReference type="PANTHER" id="PTHR11560">
    <property type="entry name" value="39S RIBOSOMAL PROTEIN L10, MITOCHONDRIAL"/>
    <property type="match status" value="1"/>
</dbReference>
<dbReference type="Pfam" id="PF00466">
    <property type="entry name" value="Ribosomal_L10"/>
    <property type="match status" value="1"/>
</dbReference>
<dbReference type="SUPFAM" id="SSF160369">
    <property type="entry name" value="Ribosomal protein L10-like"/>
    <property type="match status" value="1"/>
</dbReference>
<dbReference type="PROSITE" id="PS01109">
    <property type="entry name" value="RIBOSOMAL_L10"/>
    <property type="match status" value="1"/>
</dbReference>
<evidence type="ECO:0000250" key="1"/>
<evidence type="ECO:0000305" key="2"/>
<proteinExistence type="inferred from homology"/>
<protein>
    <recommendedName>
        <fullName evidence="2">Large ribosomal subunit protein uL10</fullName>
    </recommendedName>
    <alternativeName>
        <fullName>50S ribosomal protein L10</fullName>
    </alternativeName>
</protein>
<gene>
    <name type="primary">rplJ</name>
    <name type="ordered locus">BQ2027_MB0670</name>
</gene>
<feature type="chain" id="PRO_0000154663" description="Large ribosomal subunit protein uL10">
    <location>
        <begin position="1"/>
        <end position="178"/>
    </location>
</feature>
<name>RL10_MYCBO</name>
<organism>
    <name type="scientific">Mycobacterium bovis (strain ATCC BAA-935 / AF2122/97)</name>
    <dbReference type="NCBI Taxonomy" id="233413"/>
    <lineage>
        <taxon>Bacteria</taxon>
        <taxon>Bacillati</taxon>
        <taxon>Actinomycetota</taxon>
        <taxon>Actinomycetes</taxon>
        <taxon>Mycobacteriales</taxon>
        <taxon>Mycobacteriaceae</taxon>
        <taxon>Mycobacterium</taxon>
        <taxon>Mycobacterium tuberculosis complex</taxon>
    </lineage>
</organism>
<accession>P66045</accession>
<accession>A0A1R3XW09</accession>
<accession>P96940</accession>
<accession>X2BFP4</accession>
<sequence length="178" mass="18478">MARADKATAVADIAAQFKESTATLITEYRGLTVANLAELRRSLTGSATYAVAKNTLIKRAASEAGIEGLDELFVGPTAIAFVTGEPVDAAKAIKTFAKEHKALVIKGGYMDGHPLTVAEVERIADLESREVLLAKLAGAMKGNLAKAAGLFNAPASQLARLAAALQEKKACPGPDSAE</sequence>